<organism>
    <name type="scientific">Salmonella choleraesuis (strain SC-B67)</name>
    <dbReference type="NCBI Taxonomy" id="321314"/>
    <lineage>
        <taxon>Bacteria</taxon>
        <taxon>Pseudomonadati</taxon>
        <taxon>Pseudomonadota</taxon>
        <taxon>Gammaproteobacteria</taxon>
        <taxon>Enterobacterales</taxon>
        <taxon>Enterobacteriaceae</taxon>
        <taxon>Salmonella</taxon>
    </lineage>
</organism>
<sequence>MLILTRRVGETLMIGDEVTVTVLGVKGNQVRIGVNAPKEVSVHREEIYQRIQAEKSQQSSY</sequence>
<feature type="chain" id="PRO_1000023413" description="Translational regulator CsrA">
    <location>
        <begin position="1"/>
        <end position="61"/>
    </location>
</feature>
<reference key="1">
    <citation type="journal article" date="2005" name="Nucleic Acids Res.">
        <title>The genome sequence of Salmonella enterica serovar Choleraesuis, a highly invasive and resistant zoonotic pathogen.</title>
        <authorList>
            <person name="Chiu C.-H."/>
            <person name="Tang P."/>
            <person name="Chu C."/>
            <person name="Hu S."/>
            <person name="Bao Q."/>
            <person name="Yu J."/>
            <person name="Chou Y.-Y."/>
            <person name="Wang H.-S."/>
            <person name="Lee Y.-S."/>
        </authorList>
    </citation>
    <scope>NUCLEOTIDE SEQUENCE [LARGE SCALE GENOMIC DNA]</scope>
    <source>
        <strain>SC-B67</strain>
    </source>
</reference>
<comment type="function">
    <text evidence="1">A key translational regulator that binds mRNA to regulate translation initiation and/or mRNA stability. Mediates global changes in gene expression, shifting from rapid growth to stress survival by linking envelope stress, the stringent response and the catabolite repression systems. Usually binds in the 5'-UTR; binding at or near the Shine-Dalgarno sequence prevents ribosome-binding, repressing translation, binding elsewhere in the 5'-UTR can activate translation and/or stabilize the mRNA. Its function is antagonized by small RNA(s).</text>
</comment>
<comment type="subunit">
    <text evidence="1">Homodimer; the beta-strands of each monomer intercalate to form a hydrophobic core, while the alpha-helices form wings that extend away from the core.</text>
</comment>
<comment type="subcellular location">
    <subcellularLocation>
        <location evidence="1">Cytoplasm</location>
    </subcellularLocation>
</comment>
<comment type="similarity">
    <text evidence="1">Belongs to the CsrA/RsmA family.</text>
</comment>
<dbReference type="EMBL" id="AE017220">
    <property type="protein sequence ID" value="AAX66665.1"/>
    <property type="molecule type" value="Genomic_DNA"/>
</dbReference>
<dbReference type="RefSeq" id="WP_000906486.1">
    <property type="nucleotide sequence ID" value="NC_006905.1"/>
</dbReference>
<dbReference type="SMR" id="Q57KU7"/>
<dbReference type="GeneID" id="98389839"/>
<dbReference type="KEGG" id="sec:SCH_2759"/>
<dbReference type="HOGENOM" id="CLU_164837_2_1_6"/>
<dbReference type="Proteomes" id="UP000000538">
    <property type="component" value="Chromosome"/>
</dbReference>
<dbReference type="GO" id="GO:0005829">
    <property type="term" value="C:cytosol"/>
    <property type="evidence" value="ECO:0007669"/>
    <property type="project" value="TreeGrafter"/>
</dbReference>
<dbReference type="GO" id="GO:0048027">
    <property type="term" value="F:mRNA 5'-UTR binding"/>
    <property type="evidence" value="ECO:0007669"/>
    <property type="project" value="UniProtKB-UniRule"/>
</dbReference>
<dbReference type="GO" id="GO:0006402">
    <property type="term" value="P:mRNA catabolic process"/>
    <property type="evidence" value="ECO:0007669"/>
    <property type="project" value="InterPro"/>
</dbReference>
<dbReference type="GO" id="GO:0045947">
    <property type="term" value="P:negative regulation of translational initiation"/>
    <property type="evidence" value="ECO:0007669"/>
    <property type="project" value="UniProtKB-UniRule"/>
</dbReference>
<dbReference type="GO" id="GO:0045948">
    <property type="term" value="P:positive regulation of translational initiation"/>
    <property type="evidence" value="ECO:0007669"/>
    <property type="project" value="UniProtKB-UniRule"/>
</dbReference>
<dbReference type="GO" id="GO:0006109">
    <property type="term" value="P:regulation of carbohydrate metabolic process"/>
    <property type="evidence" value="ECO:0007669"/>
    <property type="project" value="UniProtKB-UniRule"/>
</dbReference>
<dbReference type="FunFam" id="2.60.40.4380:FF:000001">
    <property type="entry name" value="Translational regulator CsrA"/>
    <property type="match status" value="1"/>
</dbReference>
<dbReference type="Gene3D" id="2.60.40.4380">
    <property type="entry name" value="Translational regulator CsrA"/>
    <property type="match status" value="1"/>
</dbReference>
<dbReference type="HAMAP" id="MF_00167">
    <property type="entry name" value="CsrA"/>
    <property type="match status" value="1"/>
</dbReference>
<dbReference type="InterPro" id="IPR003751">
    <property type="entry name" value="CsrA"/>
</dbReference>
<dbReference type="InterPro" id="IPR036107">
    <property type="entry name" value="CsrA_sf"/>
</dbReference>
<dbReference type="NCBIfam" id="TIGR00202">
    <property type="entry name" value="csrA"/>
    <property type="match status" value="1"/>
</dbReference>
<dbReference type="NCBIfam" id="NF002469">
    <property type="entry name" value="PRK01712.1"/>
    <property type="match status" value="1"/>
</dbReference>
<dbReference type="PANTHER" id="PTHR34984">
    <property type="entry name" value="CARBON STORAGE REGULATOR"/>
    <property type="match status" value="1"/>
</dbReference>
<dbReference type="PANTHER" id="PTHR34984:SF1">
    <property type="entry name" value="CARBON STORAGE REGULATOR"/>
    <property type="match status" value="1"/>
</dbReference>
<dbReference type="Pfam" id="PF02599">
    <property type="entry name" value="CsrA"/>
    <property type="match status" value="1"/>
</dbReference>
<dbReference type="SUPFAM" id="SSF117130">
    <property type="entry name" value="CsrA-like"/>
    <property type="match status" value="1"/>
</dbReference>
<gene>
    <name evidence="1" type="primary">csrA</name>
    <name type="ordered locus">SCH_2759</name>
</gene>
<accession>Q57KU7</accession>
<keyword id="KW-0010">Activator</keyword>
<keyword id="KW-0963">Cytoplasm</keyword>
<keyword id="KW-0678">Repressor</keyword>
<keyword id="KW-0694">RNA-binding</keyword>
<keyword id="KW-0810">Translation regulation</keyword>
<name>CSRA_SALCH</name>
<proteinExistence type="inferred from homology"/>
<evidence type="ECO:0000255" key="1">
    <source>
        <dbReference type="HAMAP-Rule" id="MF_00167"/>
    </source>
</evidence>
<protein>
    <recommendedName>
        <fullName evidence="1">Translational regulator CsrA</fullName>
    </recommendedName>
    <alternativeName>
        <fullName evidence="1">Carbon storage regulator</fullName>
    </alternativeName>
</protein>